<dbReference type="EC" id="3.5.99.6" evidence="1"/>
<dbReference type="EMBL" id="CP000671">
    <property type="protein sequence ID" value="ABQ97961.1"/>
    <property type="molecule type" value="Genomic_DNA"/>
</dbReference>
<dbReference type="SMR" id="A5UB10"/>
<dbReference type="KEGG" id="hip:CGSHiEE_02580"/>
<dbReference type="HOGENOM" id="CLU_049611_0_1_6"/>
<dbReference type="UniPathway" id="UPA00629">
    <property type="reaction ID" value="UER00684"/>
</dbReference>
<dbReference type="GO" id="GO:0005737">
    <property type="term" value="C:cytoplasm"/>
    <property type="evidence" value="ECO:0007669"/>
    <property type="project" value="TreeGrafter"/>
</dbReference>
<dbReference type="GO" id="GO:0004342">
    <property type="term" value="F:glucosamine-6-phosphate deaminase activity"/>
    <property type="evidence" value="ECO:0007669"/>
    <property type="project" value="UniProtKB-UniRule"/>
</dbReference>
<dbReference type="GO" id="GO:0042802">
    <property type="term" value="F:identical protein binding"/>
    <property type="evidence" value="ECO:0007669"/>
    <property type="project" value="TreeGrafter"/>
</dbReference>
<dbReference type="GO" id="GO:0005975">
    <property type="term" value="P:carbohydrate metabolic process"/>
    <property type="evidence" value="ECO:0007669"/>
    <property type="project" value="InterPro"/>
</dbReference>
<dbReference type="GO" id="GO:0006043">
    <property type="term" value="P:glucosamine catabolic process"/>
    <property type="evidence" value="ECO:0007669"/>
    <property type="project" value="TreeGrafter"/>
</dbReference>
<dbReference type="GO" id="GO:0006046">
    <property type="term" value="P:N-acetylglucosamine catabolic process"/>
    <property type="evidence" value="ECO:0007669"/>
    <property type="project" value="TreeGrafter"/>
</dbReference>
<dbReference type="GO" id="GO:0019262">
    <property type="term" value="P:N-acetylneuraminate catabolic process"/>
    <property type="evidence" value="ECO:0007669"/>
    <property type="project" value="UniProtKB-UniRule"/>
</dbReference>
<dbReference type="CDD" id="cd01399">
    <property type="entry name" value="GlcN6P_deaminase"/>
    <property type="match status" value="1"/>
</dbReference>
<dbReference type="FunFam" id="3.40.50.1360:FF:000002">
    <property type="entry name" value="Glucosamine-6-phosphate deaminase"/>
    <property type="match status" value="1"/>
</dbReference>
<dbReference type="Gene3D" id="3.40.50.1360">
    <property type="match status" value="1"/>
</dbReference>
<dbReference type="HAMAP" id="MF_01241">
    <property type="entry name" value="GlcN6P_deamin"/>
    <property type="match status" value="1"/>
</dbReference>
<dbReference type="InterPro" id="IPR006148">
    <property type="entry name" value="Glc/Gal-6P_isomerase"/>
</dbReference>
<dbReference type="InterPro" id="IPR004547">
    <property type="entry name" value="Glucosamine6P_isomerase"/>
</dbReference>
<dbReference type="InterPro" id="IPR018321">
    <property type="entry name" value="Glucosamine6P_isomerase_CS"/>
</dbReference>
<dbReference type="InterPro" id="IPR037171">
    <property type="entry name" value="NagB/RpiA_transferase-like"/>
</dbReference>
<dbReference type="NCBIfam" id="TIGR00502">
    <property type="entry name" value="nagB"/>
    <property type="match status" value="1"/>
</dbReference>
<dbReference type="PANTHER" id="PTHR11280">
    <property type="entry name" value="GLUCOSAMINE-6-PHOSPHATE ISOMERASE"/>
    <property type="match status" value="1"/>
</dbReference>
<dbReference type="PANTHER" id="PTHR11280:SF5">
    <property type="entry name" value="GLUCOSAMINE-6-PHOSPHATE ISOMERASE"/>
    <property type="match status" value="1"/>
</dbReference>
<dbReference type="Pfam" id="PF01182">
    <property type="entry name" value="Glucosamine_iso"/>
    <property type="match status" value="1"/>
</dbReference>
<dbReference type="SUPFAM" id="SSF100950">
    <property type="entry name" value="NagB/RpiA/CoA transferase-like"/>
    <property type="match status" value="1"/>
</dbReference>
<dbReference type="PROSITE" id="PS01161">
    <property type="entry name" value="GLC_GALNAC_ISOMERASE"/>
    <property type="match status" value="1"/>
</dbReference>
<feature type="chain" id="PRO_1000066986" description="Glucosamine-6-phosphate deaminase">
    <location>
        <begin position="1"/>
        <end position="270"/>
    </location>
</feature>
<feature type="active site" description="Proton acceptor; for enolization step" evidence="1">
    <location>
        <position position="72"/>
    </location>
</feature>
<feature type="active site" description="For ring-opening step" evidence="1">
    <location>
        <position position="141"/>
    </location>
</feature>
<feature type="active site" description="Proton acceptor; for ring-opening step" evidence="1">
    <location>
        <position position="143"/>
    </location>
</feature>
<feature type="active site" description="For ring-opening step" evidence="1">
    <location>
        <position position="148"/>
    </location>
</feature>
<feature type="site" description="Part of the allosteric site" evidence="1">
    <location>
        <position position="151"/>
    </location>
</feature>
<feature type="site" description="Part of the allosteric site" evidence="1">
    <location>
        <position position="158"/>
    </location>
</feature>
<feature type="site" description="Part of the allosteric site" evidence="1">
    <location>
        <position position="160"/>
    </location>
</feature>
<feature type="site" description="Part of the allosteric site" evidence="1">
    <location>
        <position position="161"/>
    </location>
</feature>
<feature type="site" description="Part of the allosteric site" evidence="1">
    <location>
        <position position="254"/>
    </location>
</feature>
<sequence>MRFIPLQTEQQVSCWAAQHIINRINDFKPTAERPFVLGLPTGGTPLKTYQELIRLYQAGKVSFKHVVTFNMDEYVALPEEHPESYHSFMYNNFFNHIDILPENINILNGNTDDHNAECHRYEEKIKSYGKIHLFMGGVGVDGHIAFNEPASSLSSRTRIKTLTQDTLIANSRFFNNDVTQVPKYALTIGVGTLLDAEEVMILATGHQKALAVQAAVEGSINHLWTVSALQMHRHFLLVCDEAAQQELKVKTVKYFTELEGAVAGTDYQGK</sequence>
<reference key="1">
    <citation type="journal article" date="2007" name="Genome Biol.">
        <title>Characterization and modeling of the Haemophilus influenzae core and supragenomes based on the complete genomic sequences of Rd and 12 clinical nontypeable strains.</title>
        <authorList>
            <person name="Hogg J.S."/>
            <person name="Hu F.Z."/>
            <person name="Janto B."/>
            <person name="Boissy R."/>
            <person name="Hayes J."/>
            <person name="Keefe R."/>
            <person name="Post J.C."/>
            <person name="Ehrlich G.D."/>
        </authorList>
    </citation>
    <scope>NUCLEOTIDE SEQUENCE [LARGE SCALE GENOMIC DNA]</scope>
    <source>
        <strain>PittEE</strain>
    </source>
</reference>
<proteinExistence type="inferred from homology"/>
<evidence type="ECO:0000255" key="1">
    <source>
        <dbReference type="HAMAP-Rule" id="MF_01241"/>
    </source>
</evidence>
<comment type="function">
    <text evidence="1">Catalyzes the reversible isomerization-deamination of glucosamine 6-phosphate (GlcN6P) to form fructose 6-phosphate (Fru6P) and ammonium ion.</text>
</comment>
<comment type="catalytic activity">
    <reaction evidence="1">
        <text>alpha-D-glucosamine 6-phosphate + H2O = beta-D-fructose 6-phosphate + NH4(+)</text>
        <dbReference type="Rhea" id="RHEA:12172"/>
        <dbReference type="ChEBI" id="CHEBI:15377"/>
        <dbReference type="ChEBI" id="CHEBI:28938"/>
        <dbReference type="ChEBI" id="CHEBI:57634"/>
        <dbReference type="ChEBI" id="CHEBI:75989"/>
        <dbReference type="EC" id="3.5.99.6"/>
    </reaction>
</comment>
<comment type="activity regulation">
    <text evidence="1">Allosterically activated by N-acetylglucosamine 6-phosphate (GlcNAc6P).</text>
</comment>
<comment type="pathway">
    <text evidence="1">Amino-sugar metabolism; N-acetylneuraminate degradation; D-fructose 6-phosphate from N-acetylneuraminate: step 5/5.</text>
</comment>
<comment type="subunit">
    <text evidence="1">Homohexamer.</text>
</comment>
<comment type="similarity">
    <text evidence="1">Belongs to the glucosamine/galactosamine-6-phosphate isomerase family. NagB subfamily.</text>
</comment>
<keyword id="KW-0021">Allosteric enzyme</keyword>
<keyword id="KW-0119">Carbohydrate metabolism</keyword>
<keyword id="KW-0378">Hydrolase</keyword>
<gene>
    <name evidence="1" type="primary">nagB</name>
    <name type="ordered locus">CGSHiEE_02580</name>
</gene>
<accession>A5UB10</accession>
<name>NAGB_HAEIE</name>
<protein>
    <recommendedName>
        <fullName evidence="1">Glucosamine-6-phosphate deaminase</fullName>
        <ecNumber evidence="1">3.5.99.6</ecNumber>
    </recommendedName>
    <alternativeName>
        <fullName evidence="1">GlcN6P deaminase</fullName>
        <shortName evidence="1">GNPDA</shortName>
    </alternativeName>
    <alternativeName>
        <fullName evidence="1">Glucosamine-6-phosphate isomerase</fullName>
    </alternativeName>
</protein>
<organism>
    <name type="scientific">Haemophilus influenzae (strain PittEE)</name>
    <dbReference type="NCBI Taxonomy" id="374930"/>
    <lineage>
        <taxon>Bacteria</taxon>
        <taxon>Pseudomonadati</taxon>
        <taxon>Pseudomonadota</taxon>
        <taxon>Gammaproteobacteria</taxon>
        <taxon>Pasteurellales</taxon>
        <taxon>Pasteurellaceae</taxon>
        <taxon>Haemophilus</taxon>
    </lineage>
</organism>